<evidence type="ECO:0000255" key="1">
    <source>
        <dbReference type="HAMAP-Rule" id="MF_00031"/>
    </source>
</evidence>
<organism>
    <name type="scientific">Pseudoalteromonas translucida (strain TAC 125)</name>
    <dbReference type="NCBI Taxonomy" id="326442"/>
    <lineage>
        <taxon>Bacteria</taxon>
        <taxon>Pseudomonadati</taxon>
        <taxon>Pseudomonadota</taxon>
        <taxon>Gammaproteobacteria</taxon>
        <taxon>Alteromonadales</taxon>
        <taxon>Pseudoalteromonadaceae</taxon>
        <taxon>Pseudoalteromonas</taxon>
    </lineage>
</organism>
<reference key="1">
    <citation type="journal article" date="2005" name="Genome Res.">
        <title>Coping with cold: the genome of the versatile marine Antarctica bacterium Pseudoalteromonas haloplanktis TAC125.</title>
        <authorList>
            <person name="Medigue C."/>
            <person name="Krin E."/>
            <person name="Pascal G."/>
            <person name="Barbe V."/>
            <person name="Bernsel A."/>
            <person name="Bertin P.N."/>
            <person name="Cheung F."/>
            <person name="Cruveiller S."/>
            <person name="D'Amico S."/>
            <person name="Duilio A."/>
            <person name="Fang G."/>
            <person name="Feller G."/>
            <person name="Ho C."/>
            <person name="Mangenot S."/>
            <person name="Marino G."/>
            <person name="Nilsson J."/>
            <person name="Parrilli E."/>
            <person name="Rocha E.P.C."/>
            <person name="Rouy Z."/>
            <person name="Sekowska A."/>
            <person name="Tutino M.L."/>
            <person name="Vallenet D."/>
            <person name="von Heijne G."/>
            <person name="Danchin A."/>
        </authorList>
    </citation>
    <scope>NUCLEOTIDE SEQUENCE [LARGE SCALE GENOMIC DNA]</scope>
    <source>
        <strain>TAC 125</strain>
    </source>
</reference>
<proteinExistence type="inferred from homology"/>
<dbReference type="EMBL" id="CR954246">
    <property type="protein sequence ID" value="CAI86946.1"/>
    <property type="molecule type" value="Genomic_DNA"/>
</dbReference>
<dbReference type="SMR" id="Q3IIJ1"/>
<dbReference type="STRING" id="326442.PSHAa1876"/>
<dbReference type="KEGG" id="pha:PSHAa1876"/>
<dbReference type="PATRIC" id="fig|326442.8.peg.1821"/>
<dbReference type="eggNOG" id="COG0632">
    <property type="taxonomic scope" value="Bacteria"/>
</dbReference>
<dbReference type="HOGENOM" id="CLU_087936_0_0_6"/>
<dbReference type="BioCyc" id="PHAL326442:PSHA_RS09235-MONOMER"/>
<dbReference type="Proteomes" id="UP000006843">
    <property type="component" value="Chromosome I"/>
</dbReference>
<dbReference type="GO" id="GO:0005737">
    <property type="term" value="C:cytoplasm"/>
    <property type="evidence" value="ECO:0007669"/>
    <property type="project" value="UniProtKB-SubCell"/>
</dbReference>
<dbReference type="GO" id="GO:0009379">
    <property type="term" value="C:Holliday junction helicase complex"/>
    <property type="evidence" value="ECO:0007669"/>
    <property type="project" value="InterPro"/>
</dbReference>
<dbReference type="GO" id="GO:0048476">
    <property type="term" value="C:Holliday junction resolvase complex"/>
    <property type="evidence" value="ECO:0007669"/>
    <property type="project" value="UniProtKB-UniRule"/>
</dbReference>
<dbReference type="GO" id="GO:0005524">
    <property type="term" value="F:ATP binding"/>
    <property type="evidence" value="ECO:0007669"/>
    <property type="project" value="InterPro"/>
</dbReference>
<dbReference type="GO" id="GO:0000400">
    <property type="term" value="F:four-way junction DNA binding"/>
    <property type="evidence" value="ECO:0007669"/>
    <property type="project" value="UniProtKB-UniRule"/>
</dbReference>
<dbReference type="GO" id="GO:0009378">
    <property type="term" value="F:four-way junction helicase activity"/>
    <property type="evidence" value="ECO:0007669"/>
    <property type="project" value="InterPro"/>
</dbReference>
<dbReference type="GO" id="GO:0006310">
    <property type="term" value="P:DNA recombination"/>
    <property type="evidence" value="ECO:0007669"/>
    <property type="project" value="UniProtKB-UniRule"/>
</dbReference>
<dbReference type="GO" id="GO:0006281">
    <property type="term" value="P:DNA repair"/>
    <property type="evidence" value="ECO:0007669"/>
    <property type="project" value="UniProtKB-UniRule"/>
</dbReference>
<dbReference type="CDD" id="cd14332">
    <property type="entry name" value="UBA_RuvA_C"/>
    <property type="match status" value="1"/>
</dbReference>
<dbReference type="FunFam" id="2.40.50.140:FF:000083">
    <property type="entry name" value="Holliday junction ATP-dependent DNA helicase RuvA"/>
    <property type="match status" value="1"/>
</dbReference>
<dbReference type="Gene3D" id="1.10.150.20">
    <property type="entry name" value="5' to 3' exonuclease, C-terminal subdomain"/>
    <property type="match status" value="1"/>
</dbReference>
<dbReference type="Gene3D" id="1.10.8.10">
    <property type="entry name" value="DNA helicase RuvA subunit, C-terminal domain"/>
    <property type="match status" value="1"/>
</dbReference>
<dbReference type="Gene3D" id="2.40.50.140">
    <property type="entry name" value="Nucleic acid-binding proteins"/>
    <property type="match status" value="1"/>
</dbReference>
<dbReference type="HAMAP" id="MF_00031">
    <property type="entry name" value="DNA_HJ_migration_RuvA"/>
    <property type="match status" value="1"/>
</dbReference>
<dbReference type="InterPro" id="IPR013849">
    <property type="entry name" value="DNA_helicase_Holl-junc_RuvA_I"/>
</dbReference>
<dbReference type="InterPro" id="IPR003583">
    <property type="entry name" value="Hlx-hairpin-Hlx_DNA-bd_motif"/>
</dbReference>
<dbReference type="InterPro" id="IPR012340">
    <property type="entry name" value="NA-bd_OB-fold"/>
</dbReference>
<dbReference type="InterPro" id="IPR000085">
    <property type="entry name" value="RuvA"/>
</dbReference>
<dbReference type="InterPro" id="IPR010994">
    <property type="entry name" value="RuvA_2-like"/>
</dbReference>
<dbReference type="InterPro" id="IPR011114">
    <property type="entry name" value="RuvA_C"/>
</dbReference>
<dbReference type="InterPro" id="IPR036267">
    <property type="entry name" value="RuvA_C_sf"/>
</dbReference>
<dbReference type="NCBIfam" id="TIGR00084">
    <property type="entry name" value="ruvA"/>
    <property type="match status" value="1"/>
</dbReference>
<dbReference type="Pfam" id="PF14520">
    <property type="entry name" value="HHH_5"/>
    <property type="match status" value="1"/>
</dbReference>
<dbReference type="Pfam" id="PF07499">
    <property type="entry name" value="RuvA_C"/>
    <property type="match status" value="1"/>
</dbReference>
<dbReference type="Pfam" id="PF01330">
    <property type="entry name" value="RuvA_N"/>
    <property type="match status" value="1"/>
</dbReference>
<dbReference type="SMART" id="SM00278">
    <property type="entry name" value="HhH1"/>
    <property type="match status" value="2"/>
</dbReference>
<dbReference type="SUPFAM" id="SSF46929">
    <property type="entry name" value="DNA helicase RuvA subunit, C-terminal domain"/>
    <property type="match status" value="1"/>
</dbReference>
<dbReference type="SUPFAM" id="SSF50249">
    <property type="entry name" value="Nucleic acid-binding proteins"/>
    <property type="match status" value="1"/>
</dbReference>
<dbReference type="SUPFAM" id="SSF47781">
    <property type="entry name" value="RuvA domain 2-like"/>
    <property type="match status" value="1"/>
</dbReference>
<comment type="function">
    <text evidence="1">The RuvA-RuvB-RuvC complex processes Holliday junction (HJ) DNA during genetic recombination and DNA repair, while the RuvA-RuvB complex plays an important role in the rescue of blocked DNA replication forks via replication fork reversal (RFR). RuvA specifically binds to HJ cruciform DNA, conferring on it an open structure. The RuvB hexamer acts as an ATP-dependent pump, pulling dsDNA into and through the RuvAB complex. HJ branch migration allows RuvC to scan DNA until it finds its consensus sequence, where it cleaves and resolves the cruciform DNA.</text>
</comment>
<comment type="subunit">
    <text evidence="1">Homotetramer. Forms an RuvA(8)-RuvB(12)-Holliday junction (HJ) complex. HJ DNA is sandwiched between 2 RuvA tetramers; dsDNA enters through RuvA and exits via RuvB. An RuvB hexamer assembles on each DNA strand where it exits the tetramer. Each RuvB hexamer is contacted by two RuvA subunits (via domain III) on 2 adjacent RuvB subunits; this complex drives branch migration. In the full resolvosome a probable DNA-RuvA(4)-RuvB(12)-RuvC(2) complex forms which resolves the HJ.</text>
</comment>
<comment type="subcellular location">
    <subcellularLocation>
        <location evidence="1">Cytoplasm</location>
    </subcellularLocation>
</comment>
<comment type="domain">
    <text evidence="1">Has three domains with a flexible linker between the domains II and III and assumes an 'L' shape. Domain III is highly mobile and contacts RuvB.</text>
</comment>
<comment type="similarity">
    <text evidence="1">Belongs to the RuvA family.</text>
</comment>
<accession>Q3IIJ1</accession>
<name>RUVA_PSET1</name>
<sequence>MIGRLNGILVEKQPPEILLEVSGVGYEVQMPMTCFYDLPKVGESAIVYTHFVVREDAQLLFGFNNKVERALFRELLKANGVGPKLGLAILSGMSAQQFVSCVNNEDSTSLVKLPGVGKKTAERLVLEMKDRLKNWGNDLFTPFSDSAVIEPFSDATIANNAADDAVSALVSLGYKLPQAQKAVKSVSKPDMSTEVLIKESLKSML</sequence>
<keyword id="KW-0963">Cytoplasm</keyword>
<keyword id="KW-0227">DNA damage</keyword>
<keyword id="KW-0233">DNA recombination</keyword>
<keyword id="KW-0234">DNA repair</keyword>
<keyword id="KW-0238">DNA-binding</keyword>
<keyword id="KW-1185">Reference proteome</keyword>
<feature type="chain" id="PRO_0000224893" description="Holliday junction branch migration complex subunit RuvA">
    <location>
        <begin position="1"/>
        <end position="205"/>
    </location>
</feature>
<feature type="region of interest" description="Domain I" evidence="1">
    <location>
        <begin position="1"/>
        <end position="64"/>
    </location>
</feature>
<feature type="region of interest" description="Domain II" evidence="1">
    <location>
        <begin position="65"/>
        <end position="143"/>
    </location>
</feature>
<feature type="region of interest" description="Flexible linker" evidence="1">
    <location>
        <begin position="144"/>
        <end position="156"/>
    </location>
</feature>
<feature type="region of interest" description="Domain III" evidence="1">
    <location>
        <begin position="157"/>
        <end position="205"/>
    </location>
</feature>
<protein>
    <recommendedName>
        <fullName evidence="1">Holliday junction branch migration complex subunit RuvA</fullName>
    </recommendedName>
</protein>
<gene>
    <name evidence="1" type="primary">ruvA</name>
    <name type="ordered locus">PSHAa1876</name>
</gene>